<dbReference type="EMBL" id="M32486">
    <property type="protein sequence ID" value="AAA37113.1"/>
    <property type="molecule type" value="mRNA"/>
</dbReference>
<dbReference type="CCDS" id="CCDS28226.1"/>
<dbReference type="PIR" id="I49441">
    <property type="entry name" value="I49441"/>
</dbReference>
<dbReference type="SMR" id="Q60774"/>
<dbReference type="FunCoup" id="Q60774">
    <property type="interactions" value="153"/>
</dbReference>
<dbReference type="STRING" id="10090.ENSMUSP00000023435"/>
<dbReference type="iPTMnet" id="Q60774"/>
<dbReference type="PhosphoSitePlus" id="Q60774"/>
<dbReference type="PaxDb" id="10090-ENSMUSP00000023435"/>
<dbReference type="PeptideAtlas" id="Q60774"/>
<dbReference type="ProteomicsDB" id="259115"/>
<dbReference type="AGR" id="MGI:1913122"/>
<dbReference type="MGI" id="MGI:1913122">
    <property type="gene designation" value="Tmem45a"/>
</dbReference>
<dbReference type="eggNOG" id="ENOG502QU0J">
    <property type="taxonomic scope" value="Eukaryota"/>
</dbReference>
<dbReference type="InParanoid" id="Q60774"/>
<dbReference type="PhylomeDB" id="Q60774"/>
<dbReference type="ChiTaRS" id="Tmem45a">
    <property type="organism name" value="mouse"/>
</dbReference>
<dbReference type="PRO" id="PR:Q60774"/>
<dbReference type="Proteomes" id="UP000000589">
    <property type="component" value="Unplaced"/>
</dbReference>
<dbReference type="RNAct" id="Q60774">
    <property type="molecule type" value="protein"/>
</dbReference>
<dbReference type="GO" id="GO:0005886">
    <property type="term" value="C:plasma membrane"/>
    <property type="evidence" value="ECO:0000250"/>
    <property type="project" value="MGI"/>
</dbReference>
<dbReference type="InterPro" id="IPR006904">
    <property type="entry name" value="DUF716"/>
</dbReference>
<dbReference type="InterPro" id="IPR042127">
    <property type="entry name" value="TMEM45"/>
</dbReference>
<dbReference type="PANTHER" id="PTHR16007">
    <property type="entry name" value="EPIDIDYMAL MEMBRANE PROTEIN E9-RELATED"/>
    <property type="match status" value="1"/>
</dbReference>
<dbReference type="PANTHER" id="PTHR16007:SF21">
    <property type="entry name" value="TRANSMEMBRANE PROTEIN 45A"/>
    <property type="match status" value="1"/>
</dbReference>
<dbReference type="Pfam" id="PF04819">
    <property type="entry name" value="DUF716"/>
    <property type="match status" value="1"/>
</dbReference>
<name>TM45A_MOUSE</name>
<evidence type="ECO:0000255" key="1"/>
<evidence type="ECO:0000305" key="2"/>
<protein>
    <recommendedName>
        <fullName>Transmembrane protein 45A</fullName>
    </recommendedName>
    <alternativeName>
        <fullName>19.5</fullName>
    </alternativeName>
    <alternativeName>
        <fullName>Dermal papilla-derived protein 7 homolog</fullName>
    </alternativeName>
</protein>
<gene>
    <name type="primary">Tmem45a</name>
    <name type="synonym">Derp7</name>
</gene>
<organism>
    <name type="scientific">Mus musculus</name>
    <name type="common">Mouse</name>
    <dbReference type="NCBI Taxonomy" id="10090"/>
    <lineage>
        <taxon>Eukaryota</taxon>
        <taxon>Metazoa</taxon>
        <taxon>Chordata</taxon>
        <taxon>Craniata</taxon>
        <taxon>Vertebrata</taxon>
        <taxon>Euteleostomi</taxon>
        <taxon>Mammalia</taxon>
        <taxon>Eutheria</taxon>
        <taxon>Euarchontoglires</taxon>
        <taxon>Glires</taxon>
        <taxon>Rodentia</taxon>
        <taxon>Myomorpha</taxon>
        <taxon>Muroidea</taxon>
        <taxon>Muridae</taxon>
        <taxon>Murinae</taxon>
        <taxon>Mus</taxon>
        <taxon>Mus</taxon>
    </lineage>
</organism>
<accession>Q60774</accession>
<keyword id="KW-0472">Membrane</keyword>
<keyword id="KW-1185">Reference proteome</keyword>
<keyword id="KW-0812">Transmembrane</keyword>
<keyword id="KW-1133">Transmembrane helix</keyword>
<reference key="1">
    <citation type="journal article" date="1990" name="Cell Growth Differ.">
        <title>Isolation of novel complementary DNA clones from T lymphoma cells: one encodes a putative multiple membrane-spanning protein.</title>
        <authorList>
            <person name="MacLeod C.L."/>
            <person name="Fong A.M."/>
            <person name="Seal B.S."/>
            <person name="Walls L."/>
            <person name="Wilkinson M.F."/>
        </authorList>
    </citation>
    <scope>NUCLEOTIDE SEQUENCE [MRNA]</scope>
</reference>
<proteinExistence type="evidence at transcript level"/>
<sequence>MGSFKGHALPGSFFFAMGFWWTMKNILKSVYKRQTRTCYLNSKTLLRRTEIWEGVVVLLMSLTGIAGEQFISGGPALILHKDGQWNQILGWHHTTMYLFFGLQGITQIICFTTNVLPLSSSKLMLSIAIFVETFMFYNHTHGREMIDIFVHQLLVFVGTFSGLVAFLEFLVKNNALLELLRCSLLMFQGTWFWQMAFVLYPPCGSATWNLSDIQNKMFLSMCFCWHYASILILIGVKYALANWLVKSRLRKGCTSEVGLLKHADREQESEEEV</sequence>
<feature type="chain" id="PRO_0000072570" description="Transmembrane protein 45A">
    <location>
        <begin position="1"/>
        <end position="273"/>
    </location>
</feature>
<feature type="transmembrane region" description="Helical" evidence="1">
    <location>
        <begin position="8"/>
        <end position="27"/>
    </location>
</feature>
<feature type="transmembrane region" description="Helical" evidence="1">
    <location>
        <begin position="55"/>
        <end position="79"/>
    </location>
</feature>
<feature type="transmembrane region" description="Helical" evidence="1">
    <location>
        <begin position="108"/>
        <end position="131"/>
    </location>
</feature>
<feature type="transmembrane region" description="Helical" evidence="1">
    <location>
        <begin position="153"/>
        <end position="171"/>
    </location>
</feature>
<feature type="transmembrane region" description="Helical" evidence="1">
    <location>
        <begin position="217"/>
        <end position="236"/>
    </location>
</feature>
<comment type="subcellular location">
    <subcellularLocation>
        <location evidence="2">Membrane</location>
        <topology evidence="2">Multi-pass membrane protein</topology>
    </subcellularLocation>
</comment>
<comment type="similarity">
    <text evidence="2">Belongs to the TMEM45 family.</text>
</comment>